<keyword id="KW-0119">Carbohydrate metabolism</keyword>
<keyword id="KW-0456">Lyase</keyword>
<sequence>MSLGALISESRNPATMELDKLSTLAMLTCINDEDRKVPDAIRLVLPAVAQAVDLAADALKQGGRLIYLGAGTSGRLGVLDASECPPTFGVPHGMVIGLIAGGPGALLKAVEGAEDDIALGMRDLQDLQLTATDMVVGLAASGRTPYVIGALRYARELGCPTAAISCNPDSPIAQEAQVAISPVVGPEALTGSTRMKSGTAQKLVLNMLSTGAMVKLGKVYQNLMVDVKATNVKLVDRACRIVVEATGVSRAEAEHALRQTDFEVKPAILMLLKGVSAEQARQDLRQHHGYLRAAL</sequence>
<name>MURQ_YERPN</name>
<protein>
    <recommendedName>
        <fullName evidence="1">N-acetylmuramic acid 6-phosphate etherase</fullName>
        <shortName evidence="1">MurNAc-6-P etherase</shortName>
        <ecNumber evidence="1">4.2.1.126</ecNumber>
    </recommendedName>
    <alternativeName>
        <fullName evidence="1">N-acetylmuramic acid 6-phosphate hydrolase</fullName>
    </alternativeName>
    <alternativeName>
        <fullName evidence="1">N-acetylmuramic acid 6-phosphate lyase</fullName>
    </alternativeName>
</protein>
<reference key="1">
    <citation type="journal article" date="2006" name="J. Bacteriol.">
        <title>Complete genome sequence of Yersinia pestis strains Antiqua and Nepal516: evidence of gene reduction in an emerging pathogen.</title>
        <authorList>
            <person name="Chain P.S.G."/>
            <person name="Hu P."/>
            <person name="Malfatti S.A."/>
            <person name="Radnedge L."/>
            <person name="Larimer F."/>
            <person name="Vergez L.M."/>
            <person name="Worsham P."/>
            <person name="Chu M.C."/>
            <person name="Andersen G.L."/>
        </authorList>
    </citation>
    <scope>NUCLEOTIDE SEQUENCE [LARGE SCALE GENOMIC DNA]</scope>
    <source>
        <strain>Nepal516</strain>
    </source>
</reference>
<reference key="2">
    <citation type="submission" date="2009-04" db="EMBL/GenBank/DDBJ databases">
        <title>Yersinia pestis Nepal516A whole genome shotgun sequencing project.</title>
        <authorList>
            <person name="Plunkett G. III"/>
            <person name="Anderson B.D."/>
            <person name="Baumler D.J."/>
            <person name="Burland V."/>
            <person name="Cabot E.L."/>
            <person name="Glasner J.D."/>
            <person name="Mau B."/>
            <person name="Neeno-Eckwall E."/>
            <person name="Perna N.T."/>
            <person name="Munk A.C."/>
            <person name="Tapia R."/>
            <person name="Green L.D."/>
            <person name="Rogers Y.C."/>
            <person name="Detter J.C."/>
            <person name="Bruce D.C."/>
            <person name="Brettin T.S."/>
        </authorList>
    </citation>
    <scope>NUCLEOTIDE SEQUENCE [LARGE SCALE GENOMIC DNA]</scope>
    <source>
        <strain>Nepal516</strain>
    </source>
</reference>
<organism>
    <name type="scientific">Yersinia pestis bv. Antiqua (strain Nepal516)</name>
    <dbReference type="NCBI Taxonomy" id="377628"/>
    <lineage>
        <taxon>Bacteria</taxon>
        <taxon>Pseudomonadati</taxon>
        <taxon>Pseudomonadota</taxon>
        <taxon>Gammaproteobacteria</taxon>
        <taxon>Enterobacterales</taxon>
        <taxon>Yersiniaceae</taxon>
        <taxon>Yersinia</taxon>
    </lineage>
</organism>
<accession>Q1CKD6</accession>
<accession>C4GRF9</accession>
<gene>
    <name evidence="1" type="primary">murQ</name>
    <name type="ordered locus">YPN_1214</name>
    <name type="ORF">YP516_1328</name>
</gene>
<comment type="function">
    <text evidence="1">Specifically catalyzes the cleavage of the D-lactyl ether substituent of MurNAc 6-phosphate, producing GlcNAc 6-phosphate and D-lactate. Together with AnmK, is also required for the utilization of anhydro-N-acetylmuramic acid (anhMurNAc) either imported from the medium or derived from its own cell wall murein, and thus plays a role in cell wall recycling.</text>
</comment>
<comment type="catalytic activity">
    <reaction evidence="1">
        <text>N-acetyl-D-muramate 6-phosphate + H2O = N-acetyl-D-glucosamine 6-phosphate + (R)-lactate</text>
        <dbReference type="Rhea" id="RHEA:26410"/>
        <dbReference type="ChEBI" id="CHEBI:15377"/>
        <dbReference type="ChEBI" id="CHEBI:16004"/>
        <dbReference type="ChEBI" id="CHEBI:57513"/>
        <dbReference type="ChEBI" id="CHEBI:58722"/>
        <dbReference type="EC" id="4.2.1.126"/>
    </reaction>
</comment>
<comment type="pathway">
    <text evidence="1">Amino-sugar metabolism; 1,6-anhydro-N-acetylmuramate degradation.</text>
</comment>
<comment type="pathway">
    <text evidence="1">Amino-sugar metabolism; N-acetylmuramate degradation.</text>
</comment>
<comment type="pathway">
    <text evidence="1">Cell wall biogenesis; peptidoglycan recycling.</text>
</comment>
<comment type="subunit">
    <text evidence="1">Homodimer.</text>
</comment>
<comment type="induction">
    <text evidence="1">Induced by MurNAc 6-phosphate that releases the repressor MurR from the DNA. Repressed by MurR in the absence of MurNAc 6-phosphate.</text>
</comment>
<comment type="miscellaneous">
    <text evidence="1">A lyase-type mechanism (elimination/hydration) is suggested for the cleavage of the lactyl ether bond of MurNAc 6-phosphate, with the formation of an alpha,beta-unsaturated aldehyde intermediate with (E)-stereochemistry, followed by the syn addition of water to give product.</text>
</comment>
<comment type="similarity">
    <text evidence="1">Belongs to the GCKR-like family. MurNAc-6-P etherase subfamily.</text>
</comment>
<evidence type="ECO:0000255" key="1">
    <source>
        <dbReference type="HAMAP-Rule" id="MF_00068"/>
    </source>
</evidence>
<proteinExistence type="inferred from homology"/>
<dbReference type="EC" id="4.2.1.126" evidence="1"/>
<dbReference type="EMBL" id="CP000305">
    <property type="protein sequence ID" value="ABG17544.1"/>
    <property type="molecule type" value="Genomic_DNA"/>
</dbReference>
<dbReference type="EMBL" id="ACNQ01000008">
    <property type="protein sequence ID" value="EEO77650.1"/>
    <property type="molecule type" value="Genomic_DNA"/>
</dbReference>
<dbReference type="RefSeq" id="WP_002211565.1">
    <property type="nucleotide sequence ID" value="NZ_ACNQ01000008.1"/>
</dbReference>
<dbReference type="SMR" id="Q1CKD6"/>
<dbReference type="GeneID" id="57975879"/>
<dbReference type="KEGG" id="ypn:YPN_1214"/>
<dbReference type="HOGENOM" id="CLU_049049_1_1_6"/>
<dbReference type="UniPathway" id="UPA00342"/>
<dbReference type="UniPathway" id="UPA00343"/>
<dbReference type="UniPathway" id="UPA00544"/>
<dbReference type="Proteomes" id="UP000008936">
    <property type="component" value="Chromosome"/>
</dbReference>
<dbReference type="GO" id="GO:0097367">
    <property type="term" value="F:carbohydrate derivative binding"/>
    <property type="evidence" value="ECO:0007669"/>
    <property type="project" value="InterPro"/>
</dbReference>
<dbReference type="GO" id="GO:0016835">
    <property type="term" value="F:carbon-oxygen lyase activity"/>
    <property type="evidence" value="ECO:0007669"/>
    <property type="project" value="UniProtKB-UniRule"/>
</dbReference>
<dbReference type="GO" id="GO:0016803">
    <property type="term" value="F:ether hydrolase activity"/>
    <property type="evidence" value="ECO:0007669"/>
    <property type="project" value="TreeGrafter"/>
</dbReference>
<dbReference type="GO" id="GO:0097175">
    <property type="term" value="P:1,6-anhydro-N-acetyl-beta-muramic acid catabolic process"/>
    <property type="evidence" value="ECO:0007669"/>
    <property type="project" value="UniProtKB-UniRule"/>
</dbReference>
<dbReference type="GO" id="GO:0046348">
    <property type="term" value="P:amino sugar catabolic process"/>
    <property type="evidence" value="ECO:0007669"/>
    <property type="project" value="InterPro"/>
</dbReference>
<dbReference type="GO" id="GO:0097173">
    <property type="term" value="P:N-acetylmuramic acid catabolic process"/>
    <property type="evidence" value="ECO:0007669"/>
    <property type="project" value="UniProtKB-UniPathway"/>
</dbReference>
<dbReference type="GO" id="GO:0009254">
    <property type="term" value="P:peptidoglycan turnover"/>
    <property type="evidence" value="ECO:0007669"/>
    <property type="project" value="UniProtKB-UniRule"/>
</dbReference>
<dbReference type="CDD" id="cd05007">
    <property type="entry name" value="SIS_Etherase"/>
    <property type="match status" value="1"/>
</dbReference>
<dbReference type="FunFam" id="1.10.8.1080:FF:000001">
    <property type="entry name" value="N-acetylmuramic acid 6-phosphate etherase"/>
    <property type="match status" value="1"/>
</dbReference>
<dbReference type="FunFam" id="3.40.50.10490:FF:000014">
    <property type="entry name" value="N-acetylmuramic acid 6-phosphate etherase"/>
    <property type="match status" value="1"/>
</dbReference>
<dbReference type="Gene3D" id="1.10.8.1080">
    <property type="match status" value="1"/>
</dbReference>
<dbReference type="Gene3D" id="3.40.50.10490">
    <property type="entry name" value="Glucose-6-phosphate isomerase like protein, domain 1"/>
    <property type="match status" value="1"/>
</dbReference>
<dbReference type="HAMAP" id="MF_00068">
    <property type="entry name" value="MurQ"/>
    <property type="match status" value="1"/>
</dbReference>
<dbReference type="InterPro" id="IPR005488">
    <property type="entry name" value="Etherase_MurQ"/>
</dbReference>
<dbReference type="InterPro" id="IPR005486">
    <property type="entry name" value="Glucokinase_regulatory_CS"/>
</dbReference>
<dbReference type="InterPro" id="IPR040190">
    <property type="entry name" value="MURQ/GCKR"/>
</dbReference>
<dbReference type="InterPro" id="IPR001347">
    <property type="entry name" value="SIS_dom"/>
</dbReference>
<dbReference type="InterPro" id="IPR046348">
    <property type="entry name" value="SIS_dom_sf"/>
</dbReference>
<dbReference type="InterPro" id="IPR009060">
    <property type="entry name" value="UBA-like_sf"/>
</dbReference>
<dbReference type="NCBIfam" id="TIGR00274">
    <property type="entry name" value="N-acetylmuramic acid 6-phosphate etherase"/>
    <property type="match status" value="1"/>
</dbReference>
<dbReference type="NCBIfam" id="NF003915">
    <property type="entry name" value="PRK05441.1"/>
    <property type="match status" value="1"/>
</dbReference>
<dbReference type="NCBIfam" id="NF009222">
    <property type="entry name" value="PRK12570.1"/>
    <property type="match status" value="1"/>
</dbReference>
<dbReference type="PANTHER" id="PTHR10088">
    <property type="entry name" value="GLUCOKINASE REGULATORY PROTEIN"/>
    <property type="match status" value="1"/>
</dbReference>
<dbReference type="PANTHER" id="PTHR10088:SF5">
    <property type="entry name" value="N-ACETYLMURAMIC ACID 6-PHOSPHATE ETHERASE"/>
    <property type="match status" value="1"/>
</dbReference>
<dbReference type="Pfam" id="PF20741">
    <property type="entry name" value="GKRP-like_C"/>
    <property type="match status" value="1"/>
</dbReference>
<dbReference type="Pfam" id="PF22645">
    <property type="entry name" value="GKRP_SIS_N"/>
    <property type="match status" value="1"/>
</dbReference>
<dbReference type="SUPFAM" id="SSF53697">
    <property type="entry name" value="SIS domain"/>
    <property type="match status" value="1"/>
</dbReference>
<dbReference type="SUPFAM" id="SSF46934">
    <property type="entry name" value="UBA-like"/>
    <property type="match status" value="1"/>
</dbReference>
<dbReference type="PROSITE" id="PS01272">
    <property type="entry name" value="GCKR"/>
    <property type="match status" value="1"/>
</dbReference>
<dbReference type="PROSITE" id="PS51464">
    <property type="entry name" value="SIS"/>
    <property type="match status" value="1"/>
</dbReference>
<feature type="chain" id="PRO_1000009136" description="N-acetylmuramic acid 6-phosphate etherase">
    <location>
        <begin position="1"/>
        <end position="295"/>
    </location>
</feature>
<feature type="domain" description="SIS" evidence="1">
    <location>
        <begin position="55"/>
        <end position="218"/>
    </location>
</feature>
<feature type="active site" description="Proton donor" evidence="1">
    <location>
        <position position="83"/>
    </location>
</feature>
<feature type="active site" evidence="1">
    <location>
        <position position="114"/>
    </location>
</feature>